<comment type="function">
    <text evidence="1">Catalyzes oxygen-dependent 5-hydroxyuridine (ho5U) modification at position 34 in tRNAs.</text>
</comment>
<comment type="catalytic activity">
    <reaction evidence="1">
        <text>uridine(34) in tRNA + AH2 + O2 = 5-hydroxyuridine(34) in tRNA + A + H2O</text>
        <dbReference type="Rhea" id="RHEA:64224"/>
        <dbReference type="Rhea" id="RHEA-COMP:11727"/>
        <dbReference type="Rhea" id="RHEA-COMP:13381"/>
        <dbReference type="ChEBI" id="CHEBI:13193"/>
        <dbReference type="ChEBI" id="CHEBI:15377"/>
        <dbReference type="ChEBI" id="CHEBI:15379"/>
        <dbReference type="ChEBI" id="CHEBI:17499"/>
        <dbReference type="ChEBI" id="CHEBI:65315"/>
        <dbReference type="ChEBI" id="CHEBI:136877"/>
    </reaction>
</comment>
<comment type="similarity">
    <text evidence="1">Belongs to the TrhO family.</text>
</comment>
<evidence type="ECO:0000255" key="1">
    <source>
        <dbReference type="HAMAP-Rule" id="MF_00469"/>
    </source>
</evidence>
<dbReference type="EC" id="1.14.-.-" evidence="1"/>
<dbReference type="EMBL" id="CP000828">
    <property type="protein sequence ID" value="ABW26114.1"/>
    <property type="molecule type" value="Genomic_DNA"/>
</dbReference>
<dbReference type="RefSeq" id="WP_012161671.1">
    <property type="nucleotide sequence ID" value="NC_009925.1"/>
</dbReference>
<dbReference type="SMR" id="B0C1U8"/>
<dbReference type="STRING" id="329726.AM1_1075"/>
<dbReference type="KEGG" id="amr:AM1_1075"/>
<dbReference type="eggNOG" id="COG1054">
    <property type="taxonomic scope" value="Bacteria"/>
</dbReference>
<dbReference type="HOGENOM" id="CLU_038878_0_0_3"/>
<dbReference type="OrthoDB" id="9778326at2"/>
<dbReference type="Proteomes" id="UP000000268">
    <property type="component" value="Chromosome"/>
</dbReference>
<dbReference type="GO" id="GO:0016705">
    <property type="term" value="F:oxidoreductase activity, acting on paired donors, with incorporation or reduction of molecular oxygen"/>
    <property type="evidence" value="ECO:0007669"/>
    <property type="project" value="UniProtKB-UniRule"/>
</dbReference>
<dbReference type="GO" id="GO:0006400">
    <property type="term" value="P:tRNA modification"/>
    <property type="evidence" value="ECO:0007669"/>
    <property type="project" value="UniProtKB-UniRule"/>
</dbReference>
<dbReference type="CDD" id="cd01518">
    <property type="entry name" value="RHOD_YceA"/>
    <property type="match status" value="1"/>
</dbReference>
<dbReference type="Gene3D" id="3.30.70.100">
    <property type="match status" value="1"/>
</dbReference>
<dbReference type="Gene3D" id="3.40.250.10">
    <property type="entry name" value="Rhodanese-like domain"/>
    <property type="match status" value="1"/>
</dbReference>
<dbReference type="HAMAP" id="MF_00469">
    <property type="entry name" value="TrhO"/>
    <property type="match status" value="1"/>
</dbReference>
<dbReference type="InterPro" id="IPR001763">
    <property type="entry name" value="Rhodanese-like_dom"/>
</dbReference>
<dbReference type="InterPro" id="IPR036873">
    <property type="entry name" value="Rhodanese-like_dom_sf"/>
</dbReference>
<dbReference type="InterPro" id="IPR020936">
    <property type="entry name" value="TrhO"/>
</dbReference>
<dbReference type="InterPro" id="IPR040503">
    <property type="entry name" value="TRHO_N"/>
</dbReference>
<dbReference type="NCBIfam" id="NF001136">
    <property type="entry name" value="PRK00142.1-4"/>
    <property type="match status" value="1"/>
</dbReference>
<dbReference type="PANTHER" id="PTHR43268:SF3">
    <property type="entry name" value="RHODANESE-LIKE DOMAIN-CONTAINING PROTEIN 7-RELATED"/>
    <property type="match status" value="1"/>
</dbReference>
<dbReference type="PANTHER" id="PTHR43268">
    <property type="entry name" value="THIOSULFATE SULFURTRANSFERASE/RHODANESE-LIKE DOMAIN-CONTAINING PROTEIN 2"/>
    <property type="match status" value="1"/>
</dbReference>
<dbReference type="Pfam" id="PF00581">
    <property type="entry name" value="Rhodanese"/>
    <property type="match status" value="1"/>
</dbReference>
<dbReference type="Pfam" id="PF17773">
    <property type="entry name" value="UPF0176_N"/>
    <property type="match status" value="1"/>
</dbReference>
<dbReference type="SMART" id="SM00450">
    <property type="entry name" value="RHOD"/>
    <property type="match status" value="1"/>
</dbReference>
<dbReference type="SUPFAM" id="SSF52821">
    <property type="entry name" value="Rhodanese/Cell cycle control phosphatase"/>
    <property type="match status" value="1"/>
</dbReference>
<dbReference type="PROSITE" id="PS50206">
    <property type="entry name" value="RHODANESE_3"/>
    <property type="match status" value="1"/>
</dbReference>
<reference key="1">
    <citation type="journal article" date="2008" name="Proc. Natl. Acad. Sci. U.S.A.">
        <title>Niche adaptation and genome expansion in the chlorophyll d-producing cyanobacterium Acaryochloris marina.</title>
        <authorList>
            <person name="Swingley W.D."/>
            <person name="Chen M."/>
            <person name="Cheung P.C."/>
            <person name="Conrad A.L."/>
            <person name="Dejesa L.C."/>
            <person name="Hao J."/>
            <person name="Honchak B.M."/>
            <person name="Karbach L.E."/>
            <person name="Kurdoglu A."/>
            <person name="Lahiri S."/>
            <person name="Mastrian S.D."/>
            <person name="Miyashita H."/>
            <person name="Page L."/>
            <person name="Ramakrishna P."/>
            <person name="Satoh S."/>
            <person name="Sattley W.M."/>
            <person name="Shimada Y."/>
            <person name="Taylor H.L."/>
            <person name="Tomo T."/>
            <person name="Tsuchiya T."/>
            <person name="Wang Z.T."/>
            <person name="Raymond J."/>
            <person name="Mimuro M."/>
            <person name="Blankenship R.E."/>
            <person name="Touchman J.W."/>
        </authorList>
    </citation>
    <scope>NUCLEOTIDE SEQUENCE [LARGE SCALE GENOMIC DNA]</scope>
    <source>
        <strain>MBIC 11017</strain>
    </source>
</reference>
<accession>B0C1U8</accession>
<organism>
    <name type="scientific">Acaryochloris marina (strain MBIC 11017)</name>
    <dbReference type="NCBI Taxonomy" id="329726"/>
    <lineage>
        <taxon>Bacteria</taxon>
        <taxon>Bacillati</taxon>
        <taxon>Cyanobacteriota</taxon>
        <taxon>Cyanophyceae</taxon>
        <taxon>Acaryochloridales</taxon>
        <taxon>Acaryochloridaceae</taxon>
        <taxon>Acaryochloris</taxon>
    </lineage>
</organism>
<feature type="chain" id="PRO_1000081182" description="tRNA uridine(34) hydroxylase">
    <location>
        <begin position="1"/>
        <end position="310"/>
    </location>
</feature>
<feature type="domain" description="Rhodanese" evidence="1">
    <location>
        <begin position="123"/>
        <end position="217"/>
    </location>
</feature>
<feature type="active site" description="Cysteine persulfide intermediate" evidence="1">
    <location>
        <position position="177"/>
    </location>
</feature>
<name>TRHO_ACAM1</name>
<proteinExistence type="inferred from homology"/>
<sequence>MSEFLTVAFYKFVELQDYAELKAPLLACCQDNDVQGTILLATEGINGAIAGLPHNIHTVLDFLCGDPRFADLAPKESWSEKRPFYRMKVRLKKEIIKMGVPDIDPTQTVGEYVKPEDWNQLLADPDVVVIDVRNDYEVAIGTFKGAINPNTKSFSELPEWLQEQAELQKKPKVAMFCTGGIRCEKSTALLRHEGFEDVFHLQGGILSYLEKVPEDESLWQGDCFVFDERVAVGHGLKPGRYQLCRACRTPISPEDMKSEHYVPGQSCPHCYGTKTEEQQQRFAERQRQIELAKQRNQVHIGAKYSRHQPG</sequence>
<protein>
    <recommendedName>
        <fullName evidence="1">tRNA uridine(34) hydroxylase</fullName>
        <ecNumber evidence="1">1.14.-.-</ecNumber>
    </recommendedName>
    <alternativeName>
        <fullName evidence="1">tRNA hydroxylation protein O</fullName>
    </alternativeName>
</protein>
<keyword id="KW-0560">Oxidoreductase</keyword>
<keyword id="KW-1185">Reference proteome</keyword>
<keyword id="KW-0819">tRNA processing</keyword>
<gene>
    <name evidence="1" type="primary">trhO</name>
    <name type="ordered locus">AM1_1075</name>
</gene>